<reference key="1">
    <citation type="journal article" date="2014" name="Stand. Genomic Sci.">
        <title>Complete genome sequence of Anabaena variabilis ATCC 29413.</title>
        <authorList>
            <person name="Thiel T."/>
            <person name="Pratte B.S."/>
            <person name="Zhong J."/>
            <person name="Goodwin L."/>
            <person name="Copeland A."/>
            <person name="Lucas S."/>
            <person name="Han C."/>
            <person name="Pitluck S."/>
            <person name="Land M.L."/>
            <person name="Kyrpides N.C."/>
            <person name="Woyke T."/>
        </authorList>
    </citation>
    <scope>NUCLEOTIDE SEQUENCE [LARGE SCALE GENOMIC DNA]</scope>
    <source>
        <strain>ATCC 29413 / PCC 7937</strain>
    </source>
</reference>
<reference key="2">
    <citation type="journal article" date="1991" name="FEBS Lett.">
        <title>Identities of four low-molecular-mass subunits of the photosystem I complex from Anabaena variabilis ATCC 29413. Evidence for the presence of the psaI gene product in a cyanobacterial complex.</title>
        <authorList>
            <person name="Ikeuchi M."/>
            <person name="Nyhus K.J."/>
            <person name="Inoue Y."/>
            <person name="Pakrasi H.B."/>
        </authorList>
    </citation>
    <scope>PROTEIN SEQUENCE OF 2-40</scope>
</reference>
<feature type="initiator methionine" description="Removed" evidence="3">
    <location>
        <position position="1"/>
    </location>
</feature>
<feature type="chain" id="PRO_0000207775" description="Photosystem I 4.8 kDa protein">
    <location>
        <begin position="2"/>
        <end position="44"/>
    </location>
</feature>
<feature type="transmembrane region" description="Helical" evidence="2">
    <location>
        <begin position="23"/>
        <end position="43"/>
    </location>
</feature>
<comment type="subcellular location">
    <subcellularLocation>
        <location evidence="1">Cellular thylakoid membrane</location>
        <topology evidence="1">Single-pass membrane protein</topology>
    </subcellularLocation>
</comment>
<comment type="similarity">
    <text evidence="4">Belongs to the PsaX family.</text>
</comment>
<dbReference type="EMBL" id="CP000117">
    <property type="protein sequence ID" value="ABA22617.1"/>
    <property type="molecule type" value="Genomic_DNA"/>
</dbReference>
<dbReference type="PIR" id="S16978">
    <property type="entry name" value="S16978"/>
</dbReference>
<dbReference type="SMR" id="P23319"/>
<dbReference type="STRING" id="240292.Ava_3007"/>
<dbReference type="KEGG" id="ava:Ava_3007"/>
<dbReference type="eggNOG" id="ENOG5033C9V">
    <property type="taxonomic scope" value="Bacteria"/>
</dbReference>
<dbReference type="HOGENOM" id="CLU_209143_1_0_3"/>
<dbReference type="Proteomes" id="UP000002533">
    <property type="component" value="Chromosome"/>
</dbReference>
<dbReference type="GO" id="GO:0009522">
    <property type="term" value="C:photosystem I"/>
    <property type="evidence" value="ECO:0007669"/>
    <property type="project" value="UniProtKB-KW"/>
</dbReference>
<dbReference type="GO" id="GO:0031676">
    <property type="term" value="C:plasma membrane-derived thylakoid membrane"/>
    <property type="evidence" value="ECO:0007669"/>
    <property type="project" value="UniProtKB-SubCell"/>
</dbReference>
<dbReference type="GO" id="GO:0015979">
    <property type="term" value="P:photosynthesis"/>
    <property type="evidence" value="ECO:0007669"/>
    <property type="project" value="UniProtKB-KW"/>
</dbReference>
<dbReference type="InterPro" id="IPR012986">
    <property type="entry name" value="PSI_PsaX"/>
</dbReference>
<dbReference type="InterPro" id="IPR036243">
    <property type="entry name" value="PSI_PsaX_sf"/>
</dbReference>
<dbReference type="Pfam" id="PF08078">
    <property type="entry name" value="PsaX"/>
    <property type="match status" value="1"/>
</dbReference>
<dbReference type="SUPFAM" id="SSF81552">
    <property type="entry name" value="Subunit PsaX of photosystem I reaction centre"/>
    <property type="match status" value="1"/>
</dbReference>
<keyword id="KW-0903">Direct protein sequencing</keyword>
<keyword id="KW-0472">Membrane</keyword>
<keyword id="KW-0602">Photosynthesis</keyword>
<keyword id="KW-0603">Photosystem I</keyword>
<keyword id="KW-0793">Thylakoid</keyword>
<keyword id="KW-0812">Transmembrane</keyword>
<keyword id="KW-1133">Transmembrane helix</keyword>
<proteinExistence type="evidence at protein level"/>
<evidence type="ECO:0000250" key="1"/>
<evidence type="ECO:0000255" key="2"/>
<evidence type="ECO:0000269" key="3">
    <source>
    </source>
</evidence>
<evidence type="ECO:0000305" key="4"/>
<gene>
    <name type="primary">psaX</name>
    <name type="ordered locus">Ava_3007</name>
</gene>
<name>PSAX_TRIV2</name>
<sequence>MAKAKTPAVANTGAKPPYTFRTAWALLLLGVNFLVAAYYFHIIQ</sequence>
<organism>
    <name type="scientific">Trichormus variabilis (strain ATCC 29413 / PCC 7937)</name>
    <name type="common">Anabaena variabilis</name>
    <dbReference type="NCBI Taxonomy" id="240292"/>
    <lineage>
        <taxon>Bacteria</taxon>
        <taxon>Bacillati</taxon>
        <taxon>Cyanobacteriota</taxon>
        <taxon>Cyanophyceae</taxon>
        <taxon>Nostocales</taxon>
        <taxon>Nostocaceae</taxon>
        <taxon>Trichormus</taxon>
    </lineage>
</organism>
<protein>
    <recommendedName>
        <fullName>Photosystem I 4.8 kDa protein</fullName>
    </recommendedName>
</protein>
<accession>P23319</accession>
<accession>Q3M8R9</accession>